<accession>D2NT93</accession>
<name>PAFA_ROTMD</name>
<reference key="1">
    <citation type="submission" date="2009-07" db="EMBL/GenBank/DDBJ databases">
        <title>Complete genome sequence of Rothia mucilaginosa DJ.</title>
        <authorList>
            <person name="Yamane K."/>
            <person name="Nambu T."/>
            <person name="Mashimo C."/>
            <person name="Sugimori C."/>
            <person name="Yamanaka T."/>
            <person name="Leung K."/>
            <person name="Fukushima H."/>
        </authorList>
    </citation>
    <scope>NUCLEOTIDE SEQUENCE [LARGE SCALE GENOMIC DNA]</scope>
    <source>
        <strain>DY-18</strain>
    </source>
</reference>
<organism>
    <name type="scientific">Rothia mucilaginosa (strain DY-18)</name>
    <name type="common">Stomatococcus mucilaginosus</name>
    <dbReference type="NCBI Taxonomy" id="680646"/>
    <lineage>
        <taxon>Bacteria</taxon>
        <taxon>Bacillati</taxon>
        <taxon>Actinomycetota</taxon>
        <taxon>Actinomycetes</taxon>
        <taxon>Micrococcales</taxon>
        <taxon>Micrococcaceae</taxon>
        <taxon>Rothia</taxon>
    </lineage>
</organism>
<proteinExistence type="inferred from homology"/>
<comment type="function">
    <text evidence="1">Catalyzes the covalent attachment of the prokaryotic ubiquitin-like protein modifier Pup to the proteasomal substrate proteins, thereby targeting them for proteasomal degradation. This tagging system is termed pupylation. The ligation reaction involves the side-chain carboxylate of the C-terminal glutamate of Pup and the side-chain amino group of a substrate lysine.</text>
</comment>
<comment type="catalytic activity">
    <reaction evidence="1">
        <text>ATP + [prokaryotic ubiquitin-like protein]-L-glutamate + [protein]-L-lysine = ADP + phosphate + N(6)-([prokaryotic ubiquitin-like protein]-gamma-L-glutamyl)-[protein]-L-lysine.</text>
        <dbReference type="EC" id="6.3.1.19"/>
    </reaction>
</comment>
<comment type="pathway">
    <text evidence="1">Protein degradation; proteasomal Pup-dependent pathway.</text>
</comment>
<comment type="pathway">
    <text evidence="1">Protein modification; protein pupylation.</text>
</comment>
<comment type="miscellaneous">
    <text evidence="1">The reaction mechanism probably proceeds via the activation of Pup by phosphorylation of its C-terminal glutamate, which is then subject to nucleophilic attack by the substrate lysine, resulting in an isopeptide bond and the release of phosphate as a good leaving group.</text>
</comment>
<comment type="similarity">
    <text evidence="1">Belongs to the Pup ligase/Pup deamidase family. Pup-conjugating enzyme subfamily.</text>
</comment>
<protein>
    <recommendedName>
        <fullName evidence="1">Pup--protein ligase</fullName>
        <ecNumber evidence="1">6.3.1.19</ecNumber>
    </recommendedName>
    <alternativeName>
        <fullName evidence="1">Proteasome accessory factor A</fullName>
    </alternativeName>
    <alternativeName>
        <fullName evidence="1">Pup-conjugating enzyme</fullName>
    </alternativeName>
</protein>
<dbReference type="EC" id="6.3.1.19" evidence="1"/>
<dbReference type="EMBL" id="AP011540">
    <property type="protein sequence ID" value="BAI64869.1"/>
    <property type="molecule type" value="Genomic_DNA"/>
</dbReference>
<dbReference type="RefSeq" id="WP_012903530.1">
    <property type="nucleotide sequence ID" value="NC_013715.1"/>
</dbReference>
<dbReference type="SMR" id="D2NT93"/>
<dbReference type="STRING" id="680646.RMDY18_10370"/>
<dbReference type="KEGG" id="rmu:RMDY18_10370"/>
<dbReference type="eggNOG" id="COG0638">
    <property type="taxonomic scope" value="Bacteria"/>
</dbReference>
<dbReference type="HOGENOM" id="CLU_040524_0_1_11"/>
<dbReference type="UniPathway" id="UPA00997"/>
<dbReference type="UniPathway" id="UPA00998"/>
<dbReference type="Proteomes" id="UP000001883">
    <property type="component" value="Chromosome"/>
</dbReference>
<dbReference type="GO" id="GO:0005524">
    <property type="term" value="F:ATP binding"/>
    <property type="evidence" value="ECO:0007669"/>
    <property type="project" value="UniProtKB-UniRule"/>
</dbReference>
<dbReference type="GO" id="GO:0016879">
    <property type="term" value="F:ligase activity, forming carbon-nitrogen bonds"/>
    <property type="evidence" value="ECO:0007669"/>
    <property type="project" value="InterPro"/>
</dbReference>
<dbReference type="GO" id="GO:0000287">
    <property type="term" value="F:magnesium ion binding"/>
    <property type="evidence" value="ECO:0007669"/>
    <property type="project" value="UniProtKB-UniRule"/>
</dbReference>
<dbReference type="GO" id="GO:0019787">
    <property type="term" value="F:ubiquitin-like protein transferase activity"/>
    <property type="evidence" value="ECO:0007669"/>
    <property type="project" value="UniProtKB-UniRule"/>
</dbReference>
<dbReference type="GO" id="GO:0019941">
    <property type="term" value="P:modification-dependent protein catabolic process"/>
    <property type="evidence" value="ECO:0007669"/>
    <property type="project" value="UniProtKB-UniRule"/>
</dbReference>
<dbReference type="GO" id="GO:0010498">
    <property type="term" value="P:proteasomal protein catabolic process"/>
    <property type="evidence" value="ECO:0007669"/>
    <property type="project" value="UniProtKB-UniRule"/>
</dbReference>
<dbReference type="GO" id="GO:0070490">
    <property type="term" value="P:protein pupylation"/>
    <property type="evidence" value="ECO:0007669"/>
    <property type="project" value="UniProtKB-UniRule"/>
</dbReference>
<dbReference type="HAMAP" id="MF_02111">
    <property type="entry name" value="Pup_ligase"/>
    <property type="match status" value="1"/>
</dbReference>
<dbReference type="InterPro" id="IPR022279">
    <property type="entry name" value="Pup_ligase"/>
</dbReference>
<dbReference type="InterPro" id="IPR004347">
    <property type="entry name" value="Pup_ligase/deamidase"/>
</dbReference>
<dbReference type="NCBIfam" id="TIGR03686">
    <property type="entry name" value="pupylate_PafA"/>
    <property type="match status" value="1"/>
</dbReference>
<dbReference type="PANTHER" id="PTHR42307">
    <property type="entry name" value="PUP DEAMIDASE/DEPUPYLASE"/>
    <property type="match status" value="1"/>
</dbReference>
<dbReference type="PANTHER" id="PTHR42307:SF3">
    <property type="entry name" value="PUP--PROTEIN LIGASE"/>
    <property type="match status" value="1"/>
</dbReference>
<dbReference type="Pfam" id="PF03136">
    <property type="entry name" value="Pup_ligase"/>
    <property type="match status" value="1"/>
</dbReference>
<feature type="chain" id="PRO_0000395949" description="Pup--protein ligase">
    <location>
        <begin position="1"/>
        <end position="490"/>
    </location>
</feature>
<feature type="region of interest" description="Disordered" evidence="2">
    <location>
        <begin position="160"/>
        <end position="181"/>
    </location>
</feature>
<feature type="active site" description="Proton acceptor" evidence="1">
    <location>
        <position position="57"/>
    </location>
</feature>
<feature type="binding site" evidence="1">
    <location>
        <position position="9"/>
    </location>
    <ligand>
        <name>Mg(2+)</name>
        <dbReference type="ChEBI" id="CHEBI:18420"/>
    </ligand>
</feature>
<feature type="binding site" evidence="1">
    <location>
        <position position="53"/>
    </location>
    <ligand>
        <name>ATP</name>
        <dbReference type="ChEBI" id="CHEBI:30616"/>
    </ligand>
</feature>
<feature type="binding site" evidence="1">
    <location>
        <position position="55"/>
    </location>
    <ligand>
        <name>Mg(2+)</name>
        <dbReference type="ChEBI" id="CHEBI:18420"/>
    </ligand>
</feature>
<feature type="binding site" evidence="1">
    <location>
        <position position="63"/>
    </location>
    <ligand>
        <name>Mg(2+)</name>
        <dbReference type="ChEBI" id="CHEBI:18420"/>
    </ligand>
</feature>
<feature type="binding site" evidence="1">
    <location>
        <position position="66"/>
    </location>
    <ligand>
        <name>ATP</name>
        <dbReference type="ChEBI" id="CHEBI:30616"/>
    </ligand>
</feature>
<feature type="binding site" evidence="1">
    <location>
        <position position="441"/>
    </location>
    <ligand>
        <name>ATP</name>
        <dbReference type="ChEBI" id="CHEBI:30616"/>
    </ligand>
</feature>
<keyword id="KW-0067">ATP-binding</keyword>
<keyword id="KW-0436">Ligase</keyword>
<keyword id="KW-0460">Magnesium</keyword>
<keyword id="KW-0479">Metal-binding</keyword>
<keyword id="KW-0547">Nucleotide-binding</keyword>
<keyword id="KW-1185">Reference proteome</keyword>
<keyword id="KW-0833">Ubl conjugation pathway</keyword>
<gene>
    <name evidence="1" type="primary">pafA</name>
    <name type="ordered locus">RMDY18_10370</name>
</gene>
<evidence type="ECO:0000255" key="1">
    <source>
        <dbReference type="HAMAP-Rule" id="MF_02111"/>
    </source>
</evidence>
<evidence type="ECO:0000256" key="2">
    <source>
        <dbReference type="SAM" id="MobiDB-lite"/>
    </source>
</evidence>
<sequence length="490" mass="54082">MEHRIFGIESEFGLSYVPHGLGRLSIEESAAALFKPVLDQWRSTNVFLPNGGRLYLDVGSHPEYASAECGSIDELLAQERAGELLFADLARTARKRLLAGSEGRPLDGELYLFKNNVDSAGNSYGSHENYLISRKLQFNDLIAQLVPFLVTRQILVGAGKTHPNGGPVPGSTDPASSTGVPSYSFSQRADHIWEAASTSTSRARPLINTRDEPHADASKFRRMHVINGDSNMAEPTTLLKIASTDLVLRMLEDRFPVTSLDIVSVPAALRAISHDLTGTATFETTDGKHYTALSVQRHYLDAARQYVQQYGAHHHHVEYALDLWQRTLDAIESGDYSSIDSEIDWAIKKKLLDAYIARARAAGQPADYASARIRQLDLAYHDIDPERSVFHALVRRGAVKRILPEGAAEAAKTQPPNTRALQRSRFINAAVAAGEQFTVDWVHLKLNAYPQHTLVCKDPFATDSEGLEEVLTLLEGKARQHQEAAFPPPC</sequence>